<comment type="function">
    <text evidence="1">Peptide chain release factor 1 directs the termination of translation in response to the peptide chain termination codons UAG and UAA.</text>
</comment>
<comment type="subcellular location">
    <subcellularLocation>
        <location evidence="1">Cytoplasm</location>
    </subcellularLocation>
</comment>
<comment type="PTM">
    <text evidence="1">Methylated by PrmC. Methylation increases the termination efficiency of RF1.</text>
</comment>
<comment type="similarity">
    <text evidence="1">Belongs to the prokaryotic/mitochondrial release factor family.</text>
</comment>
<name>RF1_METS4</name>
<evidence type="ECO:0000255" key="1">
    <source>
        <dbReference type="HAMAP-Rule" id="MF_00093"/>
    </source>
</evidence>
<evidence type="ECO:0000256" key="2">
    <source>
        <dbReference type="SAM" id="MobiDB-lite"/>
    </source>
</evidence>
<keyword id="KW-0963">Cytoplasm</keyword>
<keyword id="KW-0488">Methylation</keyword>
<keyword id="KW-0648">Protein biosynthesis</keyword>
<dbReference type="EMBL" id="CP000943">
    <property type="protein sequence ID" value="ACA19078.1"/>
    <property type="molecule type" value="Genomic_DNA"/>
</dbReference>
<dbReference type="RefSeq" id="WP_012334465.1">
    <property type="nucleotide sequence ID" value="NC_010511.1"/>
</dbReference>
<dbReference type="SMR" id="B0UAV4"/>
<dbReference type="STRING" id="426117.M446_4748"/>
<dbReference type="KEGG" id="met:M446_4748"/>
<dbReference type="eggNOG" id="COG0216">
    <property type="taxonomic scope" value="Bacteria"/>
</dbReference>
<dbReference type="HOGENOM" id="CLU_036856_0_1_5"/>
<dbReference type="GO" id="GO:0005737">
    <property type="term" value="C:cytoplasm"/>
    <property type="evidence" value="ECO:0007669"/>
    <property type="project" value="UniProtKB-SubCell"/>
</dbReference>
<dbReference type="GO" id="GO:0016149">
    <property type="term" value="F:translation release factor activity, codon specific"/>
    <property type="evidence" value="ECO:0007669"/>
    <property type="project" value="UniProtKB-UniRule"/>
</dbReference>
<dbReference type="FunFam" id="3.30.160.20:FF:000004">
    <property type="entry name" value="Peptide chain release factor 1"/>
    <property type="match status" value="1"/>
</dbReference>
<dbReference type="FunFam" id="3.30.70.1660:FF:000002">
    <property type="entry name" value="Peptide chain release factor 1"/>
    <property type="match status" value="1"/>
</dbReference>
<dbReference type="FunFam" id="3.30.70.1660:FF:000004">
    <property type="entry name" value="Peptide chain release factor 1"/>
    <property type="match status" value="1"/>
</dbReference>
<dbReference type="Gene3D" id="3.30.160.20">
    <property type="match status" value="1"/>
</dbReference>
<dbReference type="Gene3D" id="3.30.70.1660">
    <property type="match status" value="1"/>
</dbReference>
<dbReference type="Gene3D" id="6.10.140.1950">
    <property type="match status" value="1"/>
</dbReference>
<dbReference type="HAMAP" id="MF_00093">
    <property type="entry name" value="Rel_fac_1"/>
    <property type="match status" value="1"/>
</dbReference>
<dbReference type="InterPro" id="IPR005139">
    <property type="entry name" value="PCRF"/>
</dbReference>
<dbReference type="InterPro" id="IPR000352">
    <property type="entry name" value="Pep_chain_release_fac_I"/>
</dbReference>
<dbReference type="InterPro" id="IPR045853">
    <property type="entry name" value="Pep_chain_release_fac_I_sf"/>
</dbReference>
<dbReference type="InterPro" id="IPR050057">
    <property type="entry name" value="Prokaryotic/Mito_RF"/>
</dbReference>
<dbReference type="InterPro" id="IPR004373">
    <property type="entry name" value="RF-1"/>
</dbReference>
<dbReference type="NCBIfam" id="TIGR00019">
    <property type="entry name" value="prfA"/>
    <property type="match status" value="1"/>
</dbReference>
<dbReference type="NCBIfam" id="NF001859">
    <property type="entry name" value="PRK00591.1"/>
    <property type="match status" value="1"/>
</dbReference>
<dbReference type="PANTHER" id="PTHR43804">
    <property type="entry name" value="LD18447P"/>
    <property type="match status" value="1"/>
</dbReference>
<dbReference type="PANTHER" id="PTHR43804:SF7">
    <property type="entry name" value="LD18447P"/>
    <property type="match status" value="1"/>
</dbReference>
<dbReference type="Pfam" id="PF03462">
    <property type="entry name" value="PCRF"/>
    <property type="match status" value="1"/>
</dbReference>
<dbReference type="Pfam" id="PF00472">
    <property type="entry name" value="RF-1"/>
    <property type="match status" value="1"/>
</dbReference>
<dbReference type="SMART" id="SM00937">
    <property type="entry name" value="PCRF"/>
    <property type="match status" value="1"/>
</dbReference>
<dbReference type="SUPFAM" id="SSF75620">
    <property type="entry name" value="Release factor"/>
    <property type="match status" value="1"/>
</dbReference>
<dbReference type="PROSITE" id="PS00745">
    <property type="entry name" value="RF_PROK_I"/>
    <property type="match status" value="1"/>
</dbReference>
<organism>
    <name type="scientific">Methylobacterium sp. (strain 4-46)</name>
    <dbReference type="NCBI Taxonomy" id="426117"/>
    <lineage>
        <taxon>Bacteria</taxon>
        <taxon>Pseudomonadati</taxon>
        <taxon>Pseudomonadota</taxon>
        <taxon>Alphaproteobacteria</taxon>
        <taxon>Hyphomicrobiales</taxon>
        <taxon>Methylobacteriaceae</taxon>
        <taxon>Methylobacterium</taxon>
    </lineage>
</organism>
<proteinExistence type="inferred from homology"/>
<protein>
    <recommendedName>
        <fullName evidence="1">Peptide chain release factor 1</fullName>
        <shortName evidence="1">RF-1</shortName>
    </recommendedName>
</protein>
<sequence>MIAIPSDRLDAILARHDIVTATLSAGEADSESFVQLSRELSDLDDVVAAIRAYRAAEAELRGVEAMLQEGDPEMRALAAEEKPEVEAARDAAAKALQIMLLPKDAADEKSAILEIRAGTGGDEAALFAGDLLRMYARYADLKGWKIEVVSESPGTMGGYREVVAEVKGRGVFARLKFESGAHRVQRVPETETQGRIHTSAATVAVLPEAEEVDIHVNEADLKIDTMRAQGAGGQHVNKTESAIRITHIPSGIVVFVQEERSQHKNRARAMAVLRARLYEQERSQKDAARAADRRAQVGSGDRSERIRTYNFPQGRVTDHRINLTLYKLEEVLAGTALDELVDALVTEHQAALLAAEGLG</sequence>
<feature type="chain" id="PRO_1000117248" description="Peptide chain release factor 1">
    <location>
        <begin position="1"/>
        <end position="359"/>
    </location>
</feature>
<feature type="region of interest" description="Disordered" evidence="2">
    <location>
        <begin position="283"/>
        <end position="305"/>
    </location>
</feature>
<feature type="modified residue" description="N5-methylglutamine" evidence="1">
    <location>
        <position position="234"/>
    </location>
</feature>
<gene>
    <name evidence="1" type="primary">prfA</name>
    <name type="ordered locus">M446_4748</name>
</gene>
<accession>B0UAV4</accession>
<reference key="1">
    <citation type="submission" date="2008-02" db="EMBL/GenBank/DDBJ databases">
        <title>Complete sequence of chromosome of Methylobacterium sp. 4-46.</title>
        <authorList>
            <consortium name="US DOE Joint Genome Institute"/>
            <person name="Copeland A."/>
            <person name="Lucas S."/>
            <person name="Lapidus A."/>
            <person name="Glavina del Rio T."/>
            <person name="Dalin E."/>
            <person name="Tice H."/>
            <person name="Bruce D."/>
            <person name="Goodwin L."/>
            <person name="Pitluck S."/>
            <person name="Chertkov O."/>
            <person name="Brettin T."/>
            <person name="Detter J.C."/>
            <person name="Han C."/>
            <person name="Kuske C.R."/>
            <person name="Schmutz J."/>
            <person name="Larimer F."/>
            <person name="Land M."/>
            <person name="Hauser L."/>
            <person name="Kyrpides N."/>
            <person name="Ivanova N."/>
            <person name="Marx C.J."/>
            <person name="Richardson P."/>
        </authorList>
    </citation>
    <scope>NUCLEOTIDE SEQUENCE [LARGE SCALE GENOMIC DNA]</scope>
    <source>
        <strain>4-46</strain>
    </source>
</reference>